<name>TMM69_XENTR</name>
<feature type="chain" id="PRO_0000282852" description="Transmembrane protein 69">
    <location>
        <begin position="1"/>
        <end position="253"/>
    </location>
</feature>
<feature type="transmembrane region" description="Helical" evidence="1">
    <location>
        <begin position="104"/>
        <end position="124"/>
    </location>
</feature>
<feature type="transmembrane region" description="Helical" evidence="1">
    <location>
        <begin position="137"/>
        <end position="157"/>
    </location>
</feature>
<feature type="transmembrane region" description="Helical" evidence="1">
    <location>
        <begin position="165"/>
        <end position="185"/>
    </location>
</feature>
<feature type="transmembrane region" description="Helical" evidence="1">
    <location>
        <begin position="192"/>
        <end position="212"/>
    </location>
</feature>
<feature type="transmembrane region" description="Helical" evidence="1">
    <location>
        <begin position="223"/>
        <end position="243"/>
    </location>
</feature>
<keyword id="KW-0472">Membrane</keyword>
<keyword id="KW-1185">Reference proteome</keyword>
<keyword id="KW-0812">Transmembrane</keyword>
<keyword id="KW-1133">Transmembrane helix</keyword>
<sequence>MSYLRRCLPLAQQITLLNQPAAPVYSICRQRLFSTSSRSFTKTYLFTLDRPILQSTTSTLSGQHKIHTSAHHFKKRKIQEETQKHELDLLRYDIKALKDAPKPALYLGLAGLIPFVSAPLLMNVTGCYYPEVAFAQVAYGASILSFLGGVRWGFAIPENSPAKPDWMNLTNSTVPALLAWLALLFRDNITEAAVLVIMGLGIALHYDLALLPTYPSWFKALRAILTVVAVFSLVGSLINSSVYPHKSLVSQEP</sequence>
<proteinExistence type="evidence at transcript level"/>
<gene>
    <name type="primary">tmem69</name>
</gene>
<dbReference type="EMBL" id="BC121528">
    <property type="protein sequence ID" value="AAI21529.1"/>
    <property type="molecule type" value="mRNA"/>
</dbReference>
<dbReference type="RefSeq" id="NP_001016103.1">
    <property type="nucleotide sequence ID" value="NM_001016103.3"/>
</dbReference>
<dbReference type="RefSeq" id="XP_012816507.1">
    <property type="nucleotide sequence ID" value="XM_012961053.3"/>
</dbReference>
<dbReference type="RefSeq" id="XP_012816509.1">
    <property type="nucleotide sequence ID" value="XM_012961055.3"/>
</dbReference>
<dbReference type="RefSeq" id="XP_012816510.1">
    <property type="nucleotide sequence ID" value="XM_012961056.3"/>
</dbReference>
<dbReference type="FunCoup" id="Q0V9J0">
    <property type="interactions" value="295"/>
</dbReference>
<dbReference type="STRING" id="8364.ENSXETP00000004363"/>
<dbReference type="PaxDb" id="8364-ENSXETP00000054516"/>
<dbReference type="DNASU" id="548857"/>
<dbReference type="GeneID" id="548857"/>
<dbReference type="KEGG" id="xtr:548857"/>
<dbReference type="AGR" id="Xenbase:XB-GENE-1014364"/>
<dbReference type="CTD" id="51249"/>
<dbReference type="Xenbase" id="XB-GENE-1014364">
    <property type="gene designation" value="tmem69"/>
</dbReference>
<dbReference type="eggNOG" id="ENOG502RYSE">
    <property type="taxonomic scope" value="Eukaryota"/>
</dbReference>
<dbReference type="HOGENOM" id="CLU_095371_0_0_1"/>
<dbReference type="InParanoid" id="Q0V9J0"/>
<dbReference type="OMA" id="KHLWEGP"/>
<dbReference type="OrthoDB" id="194289at2759"/>
<dbReference type="PhylomeDB" id="Q0V9J0"/>
<dbReference type="TreeFam" id="TF336126"/>
<dbReference type="Proteomes" id="UP000008143">
    <property type="component" value="Chromosome 4"/>
</dbReference>
<dbReference type="Bgee" id="ENSXETG00000025626">
    <property type="expression patterns" value="Expressed in skeletal muscle tissue and 13 other cell types or tissues"/>
</dbReference>
<dbReference type="GO" id="GO:0016020">
    <property type="term" value="C:membrane"/>
    <property type="evidence" value="ECO:0007669"/>
    <property type="project" value="UniProtKB-SubCell"/>
</dbReference>
<dbReference type="InterPro" id="IPR021836">
    <property type="entry name" value="DUF3429"/>
</dbReference>
<dbReference type="PANTHER" id="PTHR15887">
    <property type="entry name" value="TRANSMEMBRANE PROTEIN 69"/>
    <property type="match status" value="1"/>
</dbReference>
<dbReference type="PANTHER" id="PTHR15887:SF1">
    <property type="entry name" value="TRANSMEMBRANE PROTEIN 69"/>
    <property type="match status" value="1"/>
</dbReference>
<dbReference type="Pfam" id="PF11911">
    <property type="entry name" value="DUF3429"/>
    <property type="match status" value="1"/>
</dbReference>
<comment type="subcellular location">
    <subcellularLocation>
        <location evidence="2">Membrane</location>
        <topology evidence="2">Multi-pass membrane protein</topology>
    </subcellularLocation>
</comment>
<accession>Q0V9J0</accession>
<evidence type="ECO:0000255" key="1"/>
<evidence type="ECO:0000305" key="2"/>
<reference key="1">
    <citation type="submission" date="2006-08" db="EMBL/GenBank/DDBJ databases">
        <authorList>
            <consortium name="NIH - Xenopus Gene Collection (XGC) project"/>
        </authorList>
    </citation>
    <scope>NUCLEOTIDE SEQUENCE [LARGE SCALE MRNA]</scope>
    <source>
        <strain>N6</strain>
        <tissue>Lung</tissue>
    </source>
</reference>
<organism>
    <name type="scientific">Xenopus tropicalis</name>
    <name type="common">Western clawed frog</name>
    <name type="synonym">Silurana tropicalis</name>
    <dbReference type="NCBI Taxonomy" id="8364"/>
    <lineage>
        <taxon>Eukaryota</taxon>
        <taxon>Metazoa</taxon>
        <taxon>Chordata</taxon>
        <taxon>Craniata</taxon>
        <taxon>Vertebrata</taxon>
        <taxon>Euteleostomi</taxon>
        <taxon>Amphibia</taxon>
        <taxon>Batrachia</taxon>
        <taxon>Anura</taxon>
        <taxon>Pipoidea</taxon>
        <taxon>Pipidae</taxon>
        <taxon>Xenopodinae</taxon>
        <taxon>Xenopus</taxon>
        <taxon>Silurana</taxon>
    </lineage>
</organism>
<protein>
    <recommendedName>
        <fullName>Transmembrane protein 69</fullName>
    </recommendedName>
</protein>